<name>HBA3_BUBBU</name>
<sequence length="142" mass="15189">MVLSAADKSNVQAAWGKVGGHAADYGAEALERMFLSFPTTKTYFPHFDLSHGSAQVKGHGAKVAAALTKAVGHLDDLPGALSELSDLHAHKLRVDPVNFKLLSHSLLVTLASHLPNDFTPAVHASLDKFFANVSTVLTSKYR</sequence>
<evidence type="ECO:0000255" key="1">
    <source>
        <dbReference type="PROSITE-ProRule" id="PRU00238"/>
    </source>
</evidence>
<protein>
    <recommendedName>
        <fullName>Hemoglobin subunit alpha-3</fullName>
    </recommendedName>
    <alternativeName>
        <fullName>Alpha-3-globin</fullName>
    </alternativeName>
    <alternativeName>
        <fullName>Hemoglobin alpha-3 chain</fullName>
    </alternativeName>
    <alternativeName>
        <fullName>IIalpha3</fullName>
    </alternativeName>
</protein>
<comment type="function">
    <text>Involved in oxygen transport from the lung to the various peripheral tissues.</text>
</comment>
<comment type="subunit">
    <text>Heterotetramer of two alpha chains and two beta chains.</text>
</comment>
<comment type="tissue specificity">
    <text>Red blood cells.</text>
</comment>
<comment type="similarity">
    <text evidence="1">Belongs to the globin family.</text>
</comment>
<feature type="chain" id="PRO_0000052573" description="Hemoglobin subunit alpha-3">
    <location>
        <begin position="1"/>
        <end position="142"/>
    </location>
</feature>
<feature type="domain" description="Globin" evidence="1">
    <location>
        <begin position="2"/>
        <end position="142"/>
    </location>
</feature>
<feature type="binding site" evidence="1">
    <location>
        <position position="59"/>
    </location>
    <ligand>
        <name>O2</name>
        <dbReference type="ChEBI" id="CHEBI:15379"/>
    </ligand>
</feature>
<feature type="binding site" description="proximal binding residue" evidence="1">
    <location>
        <position position="88"/>
    </location>
    <ligand>
        <name>heme b</name>
        <dbReference type="ChEBI" id="CHEBI:60344"/>
    </ligand>
    <ligandPart>
        <name>Fe</name>
        <dbReference type="ChEBI" id="CHEBI:18248"/>
    </ligandPart>
</feature>
<keyword id="KW-0349">Heme</keyword>
<keyword id="KW-0408">Iron</keyword>
<keyword id="KW-0479">Metal-binding</keyword>
<keyword id="KW-0561">Oxygen transport</keyword>
<keyword id="KW-0813">Transport</keyword>
<organism>
    <name type="scientific">Bubalus bubalis</name>
    <name type="common">Domestic water buffalo</name>
    <dbReference type="NCBI Taxonomy" id="89462"/>
    <lineage>
        <taxon>Eukaryota</taxon>
        <taxon>Metazoa</taxon>
        <taxon>Chordata</taxon>
        <taxon>Craniata</taxon>
        <taxon>Vertebrata</taxon>
        <taxon>Euteleostomi</taxon>
        <taxon>Mammalia</taxon>
        <taxon>Eutheria</taxon>
        <taxon>Laurasiatheria</taxon>
        <taxon>Artiodactyla</taxon>
        <taxon>Ruminantia</taxon>
        <taxon>Pecora</taxon>
        <taxon>Bovidae</taxon>
        <taxon>Bovinae</taxon>
        <taxon>Bubalus</taxon>
    </lineage>
</organism>
<reference key="1">
    <citation type="journal article" date="2001" name="J. Protein Chem.">
        <title>Primary structure of alpha-globin chains from river buffalo (Bubalus bubalis L.) hemoglobins.</title>
        <authorList>
            <person name="Ferranti P."/>
            <person name="Facchiano A."/>
            <person name="Zappacosta F."/>
            <person name="Vincenti D."/>
            <person name="Rullo R."/>
            <person name="Masala B."/>
            <person name="Di Luccia A."/>
        </authorList>
    </citation>
    <scope>NUCLEOTIDE SEQUENCE [GENOMIC DNA]</scope>
    <source>
        <strain>Italy</strain>
    </source>
</reference>
<dbReference type="EMBL" id="AJ242733">
    <property type="protein sequence ID" value="CAB43764.1"/>
    <property type="molecule type" value="Genomic_DNA"/>
</dbReference>
<dbReference type="PIR" id="A58794">
    <property type="entry name" value="A58794"/>
</dbReference>
<dbReference type="PIR" id="B49141">
    <property type="entry name" value="B49141"/>
</dbReference>
<dbReference type="SMR" id="Q9TSN9"/>
<dbReference type="GO" id="GO:0072562">
    <property type="term" value="C:blood microparticle"/>
    <property type="evidence" value="ECO:0007669"/>
    <property type="project" value="TreeGrafter"/>
</dbReference>
<dbReference type="GO" id="GO:0031838">
    <property type="term" value="C:haptoglobin-hemoglobin complex"/>
    <property type="evidence" value="ECO:0007669"/>
    <property type="project" value="TreeGrafter"/>
</dbReference>
<dbReference type="GO" id="GO:0005833">
    <property type="term" value="C:hemoglobin complex"/>
    <property type="evidence" value="ECO:0007669"/>
    <property type="project" value="InterPro"/>
</dbReference>
<dbReference type="GO" id="GO:0031720">
    <property type="term" value="F:haptoglobin binding"/>
    <property type="evidence" value="ECO:0007669"/>
    <property type="project" value="TreeGrafter"/>
</dbReference>
<dbReference type="GO" id="GO:0020037">
    <property type="term" value="F:heme binding"/>
    <property type="evidence" value="ECO:0007669"/>
    <property type="project" value="InterPro"/>
</dbReference>
<dbReference type="GO" id="GO:0005506">
    <property type="term" value="F:iron ion binding"/>
    <property type="evidence" value="ECO:0007669"/>
    <property type="project" value="InterPro"/>
</dbReference>
<dbReference type="GO" id="GO:0043177">
    <property type="term" value="F:organic acid binding"/>
    <property type="evidence" value="ECO:0007669"/>
    <property type="project" value="TreeGrafter"/>
</dbReference>
<dbReference type="GO" id="GO:0019825">
    <property type="term" value="F:oxygen binding"/>
    <property type="evidence" value="ECO:0007669"/>
    <property type="project" value="InterPro"/>
</dbReference>
<dbReference type="GO" id="GO:0005344">
    <property type="term" value="F:oxygen carrier activity"/>
    <property type="evidence" value="ECO:0007669"/>
    <property type="project" value="UniProtKB-KW"/>
</dbReference>
<dbReference type="GO" id="GO:0004601">
    <property type="term" value="F:peroxidase activity"/>
    <property type="evidence" value="ECO:0007669"/>
    <property type="project" value="TreeGrafter"/>
</dbReference>
<dbReference type="GO" id="GO:0042744">
    <property type="term" value="P:hydrogen peroxide catabolic process"/>
    <property type="evidence" value="ECO:0007669"/>
    <property type="project" value="TreeGrafter"/>
</dbReference>
<dbReference type="CDD" id="cd08927">
    <property type="entry name" value="Hb-alpha-like"/>
    <property type="match status" value="1"/>
</dbReference>
<dbReference type="FunFam" id="1.10.490.10:FF:000002">
    <property type="entry name" value="Hemoglobin subunit alpha"/>
    <property type="match status" value="1"/>
</dbReference>
<dbReference type="Gene3D" id="1.10.490.10">
    <property type="entry name" value="Globins"/>
    <property type="match status" value="1"/>
</dbReference>
<dbReference type="InterPro" id="IPR000971">
    <property type="entry name" value="Globin"/>
</dbReference>
<dbReference type="InterPro" id="IPR009050">
    <property type="entry name" value="Globin-like_sf"/>
</dbReference>
<dbReference type="InterPro" id="IPR012292">
    <property type="entry name" value="Globin/Proto"/>
</dbReference>
<dbReference type="InterPro" id="IPR002338">
    <property type="entry name" value="Hemoglobin_a-typ"/>
</dbReference>
<dbReference type="InterPro" id="IPR050056">
    <property type="entry name" value="Hemoglobin_oxygen_transport"/>
</dbReference>
<dbReference type="InterPro" id="IPR002339">
    <property type="entry name" value="Hemoglobin_pi"/>
</dbReference>
<dbReference type="PANTHER" id="PTHR11442">
    <property type="entry name" value="HEMOGLOBIN FAMILY MEMBER"/>
    <property type="match status" value="1"/>
</dbReference>
<dbReference type="PANTHER" id="PTHR11442:SF48">
    <property type="entry name" value="HEMOGLOBIN SUBUNIT ALPHA"/>
    <property type="match status" value="1"/>
</dbReference>
<dbReference type="Pfam" id="PF00042">
    <property type="entry name" value="Globin"/>
    <property type="match status" value="1"/>
</dbReference>
<dbReference type="PRINTS" id="PR00612">
    <property type="entry name" value="ALPHAHAEM"/>
</dbReference>
<dbReference type="PRINTS" id="PR00815">
    <property type="entry name" value="PIHAEM"/>
</dbReference>
<dbReference type="SUPFAM" id="SSF46458">
    <property type="entry name" value="Globin-like"/>
    <property type="match status" value="1"/>
</dbReference>
<dbReference type="PROSITE" id="PS01033">
    <property type="entry name" value="GLOBIN"/>
    <property type="match status" value="1"/>
</dbReference>
<accession>Q9TSN9</accession>
<proteinExistence type="evidence at transcript level"/>